<accession>Q6MTB4</accession>
<protein>
    <recommendedName>
        <fullName evidence="1">Methylenetetrahydrofolate--tRNA-(uracil-5-)-methyltransferase TrmFO 2</fullName>
        <ecNumber evidence="1">2.1.1.74</ecNumber>
    </recommendedName>
    <alternativeName>
        <fullName evidence="1">Folate-dependent tRNA (uracil-5-)-methyltransferase 2</fullName>
    </alternativeName>
    <alternativeName>
        <fullName evidence="1">Folate-dependent tRNA(M-5-U54)-methyltransferase 2</fullName>
    </alternativeName>
</protein>
<gene>
    <name evidence="1" type="primary">trmFO2</name>
    <name type="ordered locus">MSC_0494</name>
</gene>
<comment type="function">
    <text evidence="1">Catalyzes the folate-dependent formation of 5-methyl-uridine at position 54 (M-5-U54) in all tRNAs.</text>
</comment>
<comment type="catalytic activity">
    <reaction evidence="1">
        <text>uridine(54) in tRNA + (6R)-5,10-methylene-5,6,7,8-tetrahydrofolate + NADH + H(+) = 5-methyluridine(54) in tRNA + (6S)-5,6,7,8-tetrahydrofolate + NAD(+)</text>
        <dbReference type="Rhea" id="RHEA:16873"/>
        <dbReference type="Rhea" id="RHEA-COMP:10167"/>
        <dbReference type="Rhea" id="RHEA-COMP:10193"/>
        <dbReference type="ChEBI" id="CHEBI:15378"/>
        <dbReference type="ChEBI" id="CHEBI:15636"/>
        <dbReference type="ChEBI" id="CHEBI:57453"/>
        <dbReference type="ChEBI" id="CHEBI:57540"/>
        <dbReference type="ChEBI" id="CHEBI:57945"/>
        <dbReference type="ChEBI" id="CHEBI:65315"/>
        <dbReference type="ChEBI" id="CHEBI:74447"/>
        <dbReference type="EC" id="2.1.1.74"/>
    </reaction>
</comment>
<comment type="catalytic activity">
    <reaction evidence="1">
        <text>uridine(54) in tRNA + (6R)-5,10-methylene-5,6,7,8-tetrahydrofolate + NADPH + H(+) = 5-methyluridine(54) in tRNA + (6S)-5,6,7,8-tetrahydrofolate + NADP(+)</text>
        <dbReference type="Rhea" id="RHEA:62372"/>
        <dbReference type="Rhea" id="RHEA-COMP:10167"/>
        <dbReference type="Rhea" id="RHEA-COMP:10193"/>
        <dbReference type="ChEBI" id="CHEBI:15378"/>
        <dbReference type="ChEBI" id="CHEBI:15636"/>
        <dbReference type="ChEBI" id="CHEBI:57453"/>
        <dbReference type="ChEBI" id="CHEBI:57783"/>
        <dbReference type="ChEBI" id="CHEBI:58349"/>
        <dbReference type="ChEBI" id="CHEBI:65315"/>
        <dbReference type="ChEBI" id="CHEBI:74447"/>
        <dbReference type="EC" id="2.1.1.74"/>
    </reaction>
</comment>
<comment type="cofactor">
    <cofactor evidence="1">
        <name>FAD</name>
        <dbReference type="ChEBI" id="CHEBI:57692"/>
    </cofactor>
</comment>
<comment type="subcellular location">
    <subcellularLocation>
        <location evidence="1">Cytoplasm</location>
    </subcellularLocation>
</comment>
<comment type="similarity">
    <text evidence="1">Belongs to the MnmG family. TrmFO subfamily.</text>
</comment>
<reference key="1">
    <citation type="journal article" date="2004" name="Genome Res.">
        <title>The genome sequence of Mycoplasma mycoides subsp. mycoides SC type strain PG1T, the causative agent of contagious bovine pleuropneumonia (CBPP).</title>
        <authorList>
            <person name="Westberg J."/>
            <person name="Persson A."/>
            <person name="Holmberg A."/>
            <person name="Goesmann A."/>
            <person name="Lundeberg J."/>
            <person name="Johansson K.-E."/>
            <person name="Pettersson B."/>
            <person name="Uhlen M."/>
        </authorList>
    </citation>
    <scope>NUCLEOTIDE SEQUENCE [LARGE SCALE GENOMIC DNA]</scope>
    <source>
        <strain>CCUG 32753 / NCTC 10114 / PG1</strain>
    </source>
</reference>
<organism>
    <name type="scientific">Mycoplasma mycoides subsp. mycoides SC (strain CCUG 32753 / NCTC 10114 / PG1)</name>
    <dbReference type="NCBI Taxonomy" id="272632"/>
    <lineage>
        <taxon>Bacteria</taxon>
        <taxon>Bacillati</taxon>
        <taxon>Mycoplasmatota</taxon>
        <taxon>Mollicutes</taxon>
        <taxon>Mycoplasmataceae</taxon>
        <taxon>Mycoplasma</taxon>
    </lineage>
</organism>
<dbReference type="EC" id="2.1.1.74" evidence="1"/>
<dbReference type="EMBL" id="BX293980">
    <property type="protein sequence ID" value="CAE77122.1"/>
    <property type="molecule type" value="Genomic_DNA"/>
</dbReference>
<dbReference type="RefSeq" id="NP_975480.1">
    <property type="nucleotide sequence ID" value="NC_005364.2"/>
</dbReference>
<dbReference type="RefSeq" id="WP_011166678.1">
    <property type="nucleotide sequence ID" value="NC_005364.2"/>
</dbReference>
<dbReference type="SMR" id="Q6MTB4"/>
<dbReference type="STRING" id="272632.MSC_0494"/>
<dbReference type="KEGG" id="mmy:MSC_0494"/>
<dbReference type="PATRIC" id="fig|272632.4.peg.534"/>
<dbReference type="eggNOG" id="COG1206">
    <property type="taxonomic scope" value="Bacteria"/>
</dbReference>
<dbReference type="HOGENOM" id="CLU_033057_1_0_14"/>
<dbReference type="Proteomes" id="UP000001016">
    <property type="component" value="Chromosome"/>
</dbReference>
<dbReference type="GO" id="GO:0005829">
    <property type="term" value="C:cytosol"/>
    <property type="evidence" value="ECO:0007669"/>
    <property type="project" value="TreeGrafter"/>
</dbReference>
<dbReference type="GO" id="GO:0050660">
    <property type="term" value="F:flavin adenine dinucleotide binding"/>
    <property type="evidence" value="ECO:0007669"/>
    <property type="project" value="UniProtKB-UniRule"/>
</dbReference>
<dbReference type="GO" id="GO:0047151">
    <property type="term" value="F:tRNA (uracil(54)-C5)-methyltransferase activity, 5,10-methylenetetrahydrofolate-dependent"/>
    <property type="evidence" value="ECO:0007669"/>
    <property type="project" value="UniProtKB-UniRule"/>
</dbReference>
<dbReference type="GO" id="GO:0030488">
    <property type="term" value="P:tRNA methylation"/>
    <property type="evidence" value="ECO:0007669"/>
    <property type="project" value="TreeGrafter"/>
</dbReference>
<dbReference type="GO" id="GO:0002098">
    <property type="term" value="P:tRNA wobble uridine modification"/>
    <property type="evidence" value="ECO:0007669"/>
    <property type="project" value="TreeGrafter"/>
</dbReference>
<dbReference type="Gene3D" id="3.50.50.60">
    <property type="entry name" value="FAD/NAD(P)-binding domain"/>
    <property type="match status" value="2"/>
</dbReference>
<dbReference type="HAMAP" id="MF_01037">
    <property type="entry name" value="TrmFO"/>
    <property type="match status" value="1"/>
</dbReference>
<dbReference type="InterPro" id="IPR036188">
    <property type="entry name" value="FAD/NAD-bd_sf"/>
</dbReference>
<dbReference type="InterPro" id="IPR002218">
    <property type="entry name" value="MnmG-rel"/>
</dbReference>
<dbReference type="InterPro" id="IPR040131">
    <property type="entry name" value="MnmG_N"/>
</dbReference>
<dbReference type="InterPro" id="IPR004417">
    <property type="entry name" value="TrmFO"/>
</dbReference>
<dbReference type="NCBIfam" id="TIGR00137">
    <property type="entry name" value="gid_trmFO"/>
    <property type="match status" value="1"/>
</dbReference>
<dbReference type="NCBIfam" id="NF003739">
    <property type="entry name" value="PRK05335.1"/>
    <property type="match status" value="1"/>
</dbReference>
<dbReference type="PANTHER" id="PTHR11806">
    <property type="entry name" value="GLUCOSE INHIBITED DIVISION PROTEIN A"/>
    <property type="match status" value="1"/>
</dbReference>
<dbReference type="PANTHER" id="PTHR11806:SF2">
    <property type="entry name" value="METHYLENETETRAHYDROFOLATE--TRNA-(URACIL-5-)-METHYLTRANSFERASE TRMFO"/>
    <property type="match status" value="1"/>
</dbReference>
<dbReference type="Pfam" id="PF01134">
    <property type="entry name" value="GIDA"/>
    <property type="match status" value="1"/>
</dbReference>
<dbReference type="SUPFAM" id="SSF51905">
    <property type="entry name" value="FAD/NAD(P)-binding domain"/>
    <property type="match status" value="1"/>
</dbReference>
<proteinExistence type="inferred from homology"/>
<sequence length="438" mass="49722">MNKKVKIIGAGLAGCEAAYFLANNNIQVELYEVKTLIKNEVQKTNNFAELVCFNTFRSQSLLNAAGILKAEMRRLNSLVIKIADGCKIDGDDALAVDREDFSKKLTEVIKNHPNITIIEQNVSHIDDENDLTLIATGPLTTNELKEDIQRLIGKQKLFFIDASASIITKDSIDFNKVYYSGRHKLGKYICCPLNEQEFNEFADNLINAEQVQLKEFEKSIFFKGCQPIEQLAKTSKKLLLKGPMSPNNLLDQNNHQPYSVVQLRQDDAKDSLYNMVGFQTNLKWPEQKRVFQTIPGLEKAKIVRYGVMHKNYYINSPKILNFKLQVMRKKNVFFAGQITGVEGYIESASSGIWAAINILAFINNKKIKPLPNTTILGALTNYITNSKIYSLKPMKCNLAILEQENKYQSNDKFYSFNNSKNSLEEYIKQLNQILGTSI</sequence>
<evidence type="ECO:0000255" key="1">
    <source>
        <dbReference type="HAMAP-Rule" id="MF_01037"/>
    </source>
</evidence>
<feature type="chain" id="PRO_0000346365" description="Methylenetetrahydrofolate--tRNA-(uracil-5-)-methyltransferase TrmFO 2">
    <location>
        <begin position="1"/>
        <end position="438"/>
    </location>
</feature>
<feature type="binding site" evidence="1">
    <location>
        <begin position="9"/>
        <end position="14"/>
    </location>
    <ligand>
        <name>FAD</name>
        <dbReference type="ChEBI" id="CHEBI:57692"/>
    </ligand>
</feature>
<keyword id="KW-0963">Cytoplasm</keyword>
<keyword id="KW-0274">FAD</keyword>
<keyword id="KW-0285">Flavoprotein</keyword>
<keyword id="KW-0489">Methyltransferase</keyword>
<keyword id="KW-0520">NAD</keyword>
<keyword id="KW-0521">NADP</keyword>
<keyword id="KW-1185">Reference proteome</keyword>
<keyword id="KW-0808">Transferase</keyword>
<keyword id="KW-0819">tRNA processing</keyword>
<name>TMFO2_MYCMS</name>